<protein>
    <recommendedName>
        <fullName evidence="1">Cyanate hydratase</fullName>
        <shortName evidence="1">Cyanase</shortName>
        <ecNumber evidence="1">4.2.1.104</ecNumber>
    </recommendedName>
    <alternativeName>
        <fullName evidence="1">Cyanate hydrolase</fullName>
    </alternativeName>
    <alternativeName>
        <fullName evidence="1">Cyanate lyase</fullName>
    </alternativeName>
</protein>
<accession>Q55367</accession>
<comment type="function">
    <text>Catalyzes the reaction of cyanate with bicarbonate to produce ammonia and carbon dioxide.</text>
</comment>
<comment type="catalytic activity">
    <reaction evidence="1">
        <text>cyanate + hydrogencarbonate + 3 H(+) = NH4(+) + 2 CO2</text>
        <dbReference type="Rhea" id="RHEA:11120"/>
        <dbReference type="ChEBI" id="CHEBI:15378"/>
        <dbReference type="ChEBI" id="CHEBI:16526"/>
        <dbReference type="ChEBI" id="CHEBI:17544"/>
        <dbReference type="ChEBI" id="CHEBI:28938"/>
        <dbReference type="ChEBI" id="CHEBI:29195"/>
        <dbReference type="EC" id="4.2.1.104"/>
    </reaction>
</comment>
<comment type="similarity">
    <text evidence="1">Belongs to the cyanase family.</text>
</comment>
<feature type="chain" id="PRO_0000187532" description="Cyanate hydratase">
    <location>
        <begin position="1"/>
        <end position="149"/>
    </location>
</feature>
<feature type="active site" evidence="1">
    <location>
        <position position="90"/>
    </location>
</feature>
<feature type="active site" evidence="1">
    <location>
        <position position="93"/>
    </location>
</feature>
<feature type="active site" evidence="1">
    <location>
        <position position="116"/>
    </location>
</feature>
<keyword id="KW-0456">Lyase</keyword>
<keyword id="KW-1185">Reference proteome</keyword>
<organism>
    <name type="scientific">Synechocystis sp. (strain ATCC 27184 / PCC 6803 / Kazusa)</name>
    <dbReference type="NCBI Taxonomy" id="1111708"/>
    <lineage>
        <taxon>Bacteria</taxon>
        <taxon>Bacillati</taxon>
        <taxon>Cyanobacteriota</taxon>
        <taxon>Cyanophyceae</taxon>
        <taxon>Synechococcales</taxon>
        <taxon>Merismopediaceae</taxon>
        <taxon>Synechocystis</taxon>
    </lineage>
</organism>
<proteinExistence type="evidence at protein level"/>
<name>CYNS_SYNY3</name>
<sequence length="149" mass="16532">MAGTEISAITTKLLEAKKAKGITFADLEQLLGRDEVWIAAVIYRQASASVDEAEKLLHCLGLSDDLVPELTAPSVKGLGPVVPTDPLIYRFYEIMQVYGMPMKEVIHEKFGDGIMSAIDFTLDIEKEADPKGDRVKVTMNGKFLPYKKW</sequence>
<evidence type="ECO:0000255" key="1">
    <source>
        <dbReference type="HAMAP-Rule" id="MF_00535"/>
    </source>
</evidence>
<reference key="1">
    <citation type="journal article" date="1995" name="DNA Res.">
        <title>Sequence analysis of the genome of the unicellular cyanobacterium Synechocystis sp. strain PCC6803. I. Sequence features in the 1 Mb region from map positions 64% to 92% of the genome.</title>
        <authorList>
            <person name="Kaneko T."/>
            <person name="Tanaka A."/>
            <person name="Sato S."/>
            <person name="Kotani H."/>
            <person name="Sazuka T."/>
            <person name="Miyajima N."/>
            <person name="Sugiura M."/>
            <person name="Tabata S."/>
        </authorList>
    </citation>
    <scope>NUCLEOTIDE SEQUENCE [LARGE SCALE GENOMIC DNA]</scope>
    <source>
        <strain>ATCC 27184 / PCC 6803 / N-1</strain>
    </source>
</reference>
<reference key="2">
    <citation type="journal article" date="1996" name="DNA Res.">
        <title>Sequence analysis of the genome of the unicellular cyanobacterium Synechocystis sp. strain PCC6803. II. Sequence determination of the entire genome and assignment of potential protein-coding regions.</title>
        <authorList>
            <person name="Kaneko T."/>
            <person name="Sato S."/>
            <person name="Kotani H."/>
            <person name="Tanaka A."/>
            <person name="Asamizu E."/>
            <person name="Nakamura Y."/>
            <person name="Miyajima N."/>
            <person name="Hirosawa M."/>
            <person name="Sugiura M."/>
            <person name="Sasamoto S."/>
            <person name="Kimura T."/>
            <person name="Hosouchi T."/>
            <person name="Matsuno A."/>
            <person name="Muraki A."/>
            <person name="Nakazaki N."/>
            <person name="Naruo K."/>
            <person name="Okumura S."/>
            <person name="Shimpo S."/>
            <person name="Takeuchi C."/>
            <person name="Wada T."/>
            <person name="Watanabe A."/>
            <person name="Yamada M."/>
            <person name="Yasuda M."/>
            <person name="Tabata S."/>
        </authorList>
    </citation>
    <scope>NUCLEOTIDE SEQUENCE [LARGE SCALE GENOMIC DNA]</scope>
    <source>
        <strain>ATCC 27184 / PCC 6803 / Kazusa</strain>
    </source>
</reference>
<reference key="3">
    <citation type="journal article" date="1997" name="J. Bacteriol.">
        <title>Identification and nitrogen regulation of the cyanase gene from the cyanobacteria Synechocystis sp. strain PCC 6803 and Synechococcus sp. strain PCC 7942.</title>
        <authorList>
            <person name="Harano Y."/>
            <person name="Suzuki I."/>
            <person name="Maeda S."/>
            <person name="Kaneko T."/>
            <person name="Tabata S."/>
            <person name="Omata T."/>
        </authorList>
    </citation>
    <scope>CHARACTERIZATION</scope>
</reference>
<gene>
    <name evidence="1" type="primary">cynS</name>
    <name type="ordered locus">slr0899</name>
</gene>
<dbReference type="EC" id="4.2.1.104" evidence="1"/>
<dbReference type="EMBL" id="BA000022">
    <property type="protein sequence ID" value="BAA10449.1"/>
    <property type="molecule type" value="Genomic_DNA"/>
</dbReference>
<dbReference type="PIR" id="S75714">
    <property type="entry name" value="S75714"/>
</dbReference>
<dbReference type="SMR" id="Q55367"/>
<dbReference type="STRING" id="1148.gene:10499950"/>
<dbReference type="PaxDb" id="1148-1001209"/>
<dbReference type="EnsemblBacteria" id="BAA10449">
    <property type="protein sequence ID" value="BAA10449"/>
    <property type="gene ID" value="BAA10449"/>
</dbReference>
<dbReference type="KEGG" id="syn:slr0899"/>
<dbReference type="eggNOG" id="COG1513">
    <property type="taxonomic scope" value="Bacteria"/>
</dbReference>
<dbReference type="InParanoid" id="Q55367"/>
<dbReference type="PhylomeDB" id="Q55367"/>
<dbReference type="BRENDA" id="4.2.1.104">
    <property type="organism ID" value="382"/>
</dbReference>
<dbReference type="Proteomes" id="UP000001425">
    <property type="component" value="Chromosome"/>
</dbReference>
<dbReference type="GO" id="GO:0008824">
    <property type="term" value="F:cyanate hydratase activity"/>
    <property type="evidence" value="ECO:0007669"/>
    <property type="project" value="UniProtKB-UniRule"/>
</dbReference>
<dbReference type="GO" id="GO:0003677">
    <property type="term" value="F:DNA binding"/>
    <property type="evidence" value="ECO:0007669"/>
    <property type="project" value="InterPro"/>
</dbReference>
<dbReference type="GO" id="GO:0009439">
    <property type="term" value="P:cyanate metabolic process"/>
    <property type="evidence" value="ECO:0007669"/>
    <property type="project" value="UniProtKB-UniRule"/>
</dbReference>
<dbReference type="CDD" id="cd00559">
    <property type="entry name" value="Cyanase_C"/>
    <property type="match status" value="1"/>
</dbReference>
<dbReference type="Gene3D" id="3.30.1160.10">
    <property type="entry name" value="Cyanate lyase, C-terminal domain"/>
    <property type="match status" value="1"/>
</dbReference>
<dbReference type="Gene3D" id="1.10.260.40">
    <property type="entry name" value="lambda repressor-like DNA-binding domains"/>
    <property type="match status" value="1"/>
</dbReference>
<dbReference type="HAMAP" id="MF_00535">
    <property type="entry name" value="Cyanate_hydrat"/>
    <property type="match status" value="1"/>
</dbReference>
<dbReference type="InterPro" id="IPR008076">
    <property type="entry name" value="Cyanase"/>
</dbReference>
<dbReference type="InterPro" id="IPR003712">
    <property type="entry name" value="Cyanate_lyase_C"/>
</dbReference>
<dbReference type="InterPro" id="IPR036581">
    <property type="entry name" value="Cyanate_lyase_C_sf"/>
</dbReference>
<dbReference type="InterPro" id="IPR010982">
    <property type="entry name" value="Lambda_DNA-bd_dom_sf"/>
</dbReference>
<dbReference type="NCBIfam" id="TIGR00673">
    <property type="entry name" value="cynS"/>
    <property type="match status" value="1"/>
</dbReference>
<dbReference type="NCBIfam" id="NF002773">
    <property type="entry name" value="PRK02866.1"/>
    <property type="match status" value="1"/>
</dbReference>
<dbReference type="PANTHER" id="PTHR34186">
    <property type="entry name" value="CYANATE HYDRATASE"/>
    <property type="match status" value="1"/>
</dbReference>
<dbReference type="PANTHER" id="PTHR34186:SF2">
    <property type="entry name" value="CYANATE HYDRATASE"/>
    <property type="match status" value="1"/>
</dbReference>
<dbReference type="Pfam" id="PF02560">
    <property type="entry name" value="Cyanate_lyase"/>
    <property type="match status" value="1"/>
</dbReference>
<dbReference type="PIRSF" id="PIRSF001263">
    <property type="entry name" value="Cyanate_hydratas"/>
    <property type="match status" value="1"/>
</dbReference>
<dbReference type="PRINTS" id="PR01693">
    <property type="entry name" value="CYANASE"/>
</dbReference>
<dbReference type="SMART" id="SM01116">
    <property type="entry name" value="Cyanate_lyase"/>
    <property type="match status" value="1"/>
</dbReference>
<dbReference type="SUPFAM" id="SSF55234">
    <property type="entry name" value="Cyanase C-terminal domain"/>
    <property type="match status" value="1"/>
</dbReference>
<dbReference type="SUPFAM" id="SSF47413">
    <property type="entry name" value="lambda repressor-like DNA-binding domains"/>
    <property type="match status" value="1"/>
</dbReference>